<name>HSPR_STRCO</name>
<protein>
    <recommendedName>
        <fullName>Putative heat shock protein HspR</fullName>
    </recommendedName>
</protein>
<feature type="chain" id="PRO_0000098127" description="Putative heat shock protein HspR">
    <location>
        <begin position="1"/>
        <end position="151"/>
    </location>
</feature>
<feature type="domain" description="HTH merR-type" evidence="1">
    <location>
        <begin position="17"/>
        <end position="86"/>
    </location>
</feature>
<feature type="DNA-binding region" description="H-T-H motif" evidence="1">
    <location>
        <begin position="20"/>
        <end position="39"/>
    </location>
</feature>
<dbReference type="EMBL" id="L46700">
    <property type="protein sequence ID" value="AAB29454.1"/>
    <property type="molecule type" value="Genomic_DNA"/>
</dbReference>
<dbReference type="EMBL" id="AL939117">
    <property type="protein sequence ID" value="CAB91159.1"/>
    <property type="molecule type" value="Genomic_DNA"/>
</dbReference>
<dbReference type="PIR" id="S70209">
    <property type="entry name" value="S70209"/>
</dbReference>
<dbReference type="RefSeq" id="NP_627861.1">
    <property type="nucleotide sequence ID" value="NC_003888.3"/>
</dbReference>
<dbReference type="RefSeq" id="WP_003975271.1">
    <property type="nucleotide sequence ID" value="NZ_VNID01000003.1"/>
</dbReference>
<dbReference type="SMR" id="P40183"/>
<dbReference type="FunCoup" id="P40183">
    <property type="interactions" value="1"/>
</dbReference>
<dbReference type="STRING" id="100226.gene:17761291"/>
<dbReference type="PaxDb" id="100226-SCO3668"/>
<dbReference type="KEGG" id="sco:SCO3668"/>
<dbReference type="PATRIC" id="fig|100226.15.peg.3726"/>
<dbReference type="eggNOG" id="COG0789">
    <property type="taxonomic scope" value="Bacteria"/>
</dbReference>
<dbReference type="HOGENOM" id="CLU_060077_7_1_11"/>
<dbReference type="InParanoid" id="P40183"/>
<dbReference type="OrthoDB" id="5345718at2"/>
<dbReference type="PhylomeDB" id="P40183"/>
<dbReference type="Proteomes" id="UP000001973">
    <property type="component" value="Chromosome"/>
</dbReference>
<dbReference type="GO" id="GO:0003677">
    <property type="term" value="F:DNA binding"/>
    <property type="evidence" value="ECO:0007669"/>
    <property type="project" value="UniProtKB-KW"/>
</dbReference>
<dbReference type="GO" id="GO:0003700">
    <property type="term" value="F:DNA-binding transcription factor activity"/>
    <property type="evidence" value="ECO:0000318"/>
    <property type="project" value="GO_Central"/>
</dbReference>
<dbReference type="GO" id="GO:0045892">
    <property type="term" value="P:negative regulation of DNA-templated transcription"/>
    <property type="evidence" value="ECO:0000315"/>
    <property type="project" value="CACAO"/>
</dbReference>
<dbReference type="FunFam" id="1.10.1660.10:FF:000008">
    <property type="entry name" value="Heat shock transcriptional regulator"/>
    <property type="match status" value="1"/>
</dbReference>
<dbReference type="Gene3D" id="1.10.1660.10">
    <property type="match status" value="1"/>
</dbReference>
<dbReference type="InterPro" id="IPR009061">
    <property type="entry name" value="DNA-bd_dom_put_sf"/>
</dbReference>
<dbReference type="InterPro" id="IPR000551">
    <property type="entry name" value="MerR-type_HTH_dom"/>
</dbReference>
<dbReference type="InterPro" id="IPR047057">
    <property type="entry name" value="MerR_fam"/>
</dbReference>
<dbReference type="NCBIfam" id="NF047375">
    <property type="entry name" value="HeatShock_HspR"/>
    <property type="match status" value="1"/>
</dbReference>
<dbReference type="PANTHER" id="PTHR30204:SF58">
    <property type="entry name" value="HTH-TYPE TRANSCRIPTIONAL REGULATOR YFMP"/>
    <property type="match status" value="1"/>
</dbReference>
<dbReference type="PANTHER" id="PTHR30204">
    <property type="entry name" value="REDOX-CYCLING DRUG-SENSING TRANSCRIPTIONAL ACTIVATOR SOXR"/>
    <property type="match status" value="1"/>
</dbReference>
<dbReference type="Pfam" id="PF13411">
    <property type="entry name" value="MerR_1"/>
    <property type="match status" value="1"/>
</dbReference>
<dbReference type="SMART" id="SM00422">
    <property type="entry name" value="HTH_MERR"/>
    <property type="match status" value="1"/>
</dbReference>
<dbReference type="SUPFAM" id="SSF46955">
    <property type="entry name" value="Putative DNA-binding domain"/>
    <property type="match status" value="1"/>
</dbReference>
<dbReference type="PROSITE" id="PS00552">
    <property type="entry name" value="HTH_MERR_1"/>
    <property type="match status" value="1"/>
</dbReference>
<dbReference type="PROSITE" id="PS50937">
    <property type="entry name" value="HTH_MERR_2"/>
    <property type="match status" value="1"/>
</dbReference>
<gene>
    <name type="primary">hspR</name>
    <name type="ordered locus">SCO3668</name>
    <name type="ORF">SCH44.08c</name>
</gene>
<keyword id="KW-0238">DNA-binding</keyword>
<keyword id="KW-1185">Reference proteome</keyword>
<keyword id="KW-0346">Stress response</keyword>
<keyword id="KW-0804">Transcription</keyword>
<keyword id="KW-0805">Transcription regulation</keyword>
<reference key="1">
    <citation type="journal article" date="1995" name="Mol. Microbiol.">
        <title>The dnaK operon of Streptomyces coelicolor encodes a novel heat-shock protein which binds to the promoter region of the operon.</title>
        <authorList>
            <person name="Bucca G."/>
            <person name="Ferina G."/>
            <person name="Puglia A.M."/>
            <person name="Smith C.P."/>
        </authorList>
    </citation>
    <scope>NUCLEOTIDE SEQUENCE [GENOMIC DNA]</scope>
    <source>
        <strain>ATCC BAA-471 / A3(2) / M145</strain>
    </source>
</reference>
<reference key="2">
    <citation type="journal article" date="2002" name="Nature">
        <title>Complete genome sequence of the model actinomycete Streptomyces coelicolor A3(2).</title>
        <authorList>
            <person name="Bentley S.D."/>
            <person name="Chater K.F."/>
            <person name="Cerdeno-Tarraga A.-M."/>
            <person name="Challis G.L."/>
            <person name="Thomson N.R."/>
            <person name="James K.D."/>
            <person name="Harris D.E."/>
            <person name="Quail M.A."/>
            <person name="Kieser H."/>
            <person name="Harper D."/>
            <person name="Bateman A."/>
            <person name="Brown S."/>
            <person name="Chandra G."/>
            <person name="Chen C.W."/>
            <person name="Collins M."/>
            <person name="Cronin A."/>
            <person name="Fraser A."/>
            <person name="Goble A."/>
            <person name="Hidalgo J."/>
            <person name="Hornsby T."/>
            <person name="Howarth S."/>
            <person name="Huang C.-H."/>
            <person name="Kieser T."/>
            <person name="Larke L."/>
            <person name="Murphy L.D."/>
            <person name="Oliver K."/>
            <person name="O'Neil S."/>
            <person name="Rabbinowitsch E."/>
            <person name="Rajandream M.A."/>
            <person name="Rutherford K.M."/>
            <person name="Rutter S."/>
            <person name="Seeger K."/>
            <person name="Saunders D."/>
            <person name="Sharp S."/>
            <person name="Squares R."/>
            <person name="Squares S."/>
            <person name="Taylor K."/>
            <person name="Warren T."/>
            <person name="Wietzorrek A."/>
            <person name="Woodward J.R."/>
            <person name="Barrell B.G."/>
            <person name="Parkhill J."/>
            <person name="Hopwood D.A."/>
        </authorList>
    </citation>
    <scope>NUCLEOTIDE SEQUENCE [LARGE SCALE GENOMIC DNA]</scope>
    <source>
        <strain>ATCC BAA-471 / A3(2) / M145</strain>
    </source>
</reference>
<comment type="function">
    <text>Binds to three inverted repeats (IR1-IR3) in the promoter region of the dnaK operon.</text>
</comment>
<comment type="induction">
    <text>By heat shock.</text>
</comment>
<sequence length="151" mass="16939">MDGRRRNPYELTEDTPVYVISVAAQLSGLHPQTLRQYDRLGLVSPDRTAGRGRRYSARDIELLRQVQQLSQDEGINLAGIKRIIELENQVAELQARAAELAAALDGAATAMRQREAAVHASYRRDLVPYQEVQQTSALVVWRPSRRGQSSD</sequence>
<evidence type="ECO:0000255" key="1">
    <source>
        <dbReference type="PROSITE-ProRule" id="PRU00254"/>
    </source>
</evidence>
<organism>
    <name type="scientific">Streptomyces coelicolor (strain ATCC BAA-471 / A3(2) / M145)</name>
    <dbReference type="NCBI Taxonomy" id="100226"/>
    <lineage>
        <taxon>Bacteria</taxon>
        <taxon>Bacillati</taxon>
        <taxon>Actinomycetota</taxon>
        <taxon>Actinomycetes</taxon>
        <taxon>Kitasatosporales</taxon>
        <taxon>Streptomycetaceae</taxon>
        <taxon>Streptomyces</taxon>
        <taxon>Streptomyces albidoflavus group</taxon>
    </lineage>
</organism>
<accession>P40183</accession>
<proteinExistence type="evidence at transcript level"/>